<name>LSG1_RAT</name>
<proteinExistence type="evidence at transcript level"/>
<keyword id="KW-0963">Cytoplasm</keyword>
<keyword id="KW-0256">Endoplasmic reticulum</keyword>
<keyword id="KW-0342">GTP-binding</keyword>
<keyword id="KW-0378">Hydrolase</keyword>
<keyword id="KW-0547">Nucleotide-binding</keyword>
<keyword id="KW-0539">Nucleus</keyword>
<keyword id="KW-0597">Phosphoprotein</keyword>
<keyword id="KW-0653">Protein transport</keyword>
<keyword id="KW-1185">Reference proteome</keyword>
<keyword id="KW-0813">Transport</keyword>
<gene>
    <name evidence="6" type="primary">Lsg1</name>
</gene>
<reference key="1">
    <citation type="journal article" date="2004" name="Genome Res.">
        <title>The status, quality, and expansion of the NIH full-length cDNA project: the Mammalian Gene Collection (MGC).</title>
        <authorList>
            <consortium name="The MGC Project Team"/>
        </authorList>
    </citation>
    <scope>NUCLEOTIDE SEQUENCE [LARGE SCALE MRNA]</scope>
    <source>
        <tissue>Brain</tissue>
    </source>
</reference>
<accession>Q5BJT6</accession>
<feature type="chain" id="PRO_0000324556" description="Large subunit GTPase 1 homolog">
    <location>
        <begin position="1"/>
        <end position="655"/>
    </location>
</feature>
<feature type="domain" description="CP-type G" evidence="4">
    <location>
        <begin position="164"/>
        <end position="441"/>
    </location>
</feature>
<feature type="region of interest" description="Disordered" evidence="5">
    <location>
        <begin position="1"/>
        <end position="31"/>
    </location>
</feature>
<feature type="region of interest" description="Disordered" evidence="5">
    <location>
        <begin position="253"/>
        <end position="359"/>
    </location>
</feature>
<feature type="region of interest" description="Disordered" evidence="5">
    <location>
        <begin position="625"/>
        <end position="655"/>
    </location>
</feature>
<feature type="compositionally biased region" description="Basic residues" evidence="5">
    <location>
        <begin position="16"/>
        <end position="28"/>
    </location>
</feature>
<feature type="compositionally biased region" description="Acidic residues" evidence="5">
    <location>
        <begin position="288"/>
        <end position="327"/>
    </location>
</feature>
<feature type="compositionally biased region" description="Basic and acidic residues" evidence="5">
    <location>
        <begin position="328"/>
        <end position="339"/>
    </location>
</feature>
<feature type="compositionally biased region" description="Polar residues" evidence="5">
    <location>
        <begin position="344"/>
        <end position="359"/>
    </location>
</feature>
<feature type="compositionally biased region" description="Basic residues" evidence="5">
    <location>
        <begin position="633"/>
        <end position="655"/>
    </location>
</feature>
<feature type="binding site" evidence="3">
    <location>
        <begin position="212"/>
        <end position="215"/>
    </location>
    <ligand>
        <name>GTP</name>
        <dbReference type="ChEBI" id="CHEBI:37565"/>
    </ligand>
</feature>
<feature type="binding site" evidence="3">
    <location>
        <begin position="390"/>
        <end position="397"/>
    </location>
    <ligand>
        <name>GTP</name>
        <dbReference type="ChEBI" id="CHEBI:37565"/>
    </ligand>
</feature>
<feature type="binding site" evidence="3">
    <location>
        <begin position="434"/>
        <end position="437"/>
    </location>
    <ligand>
        <name>GTP</name>
        <dbReference type="ChEBI" id="CHEBI:37565"/>
    </ligand>
</feature>
<feature type="modified residue" description="Phosphoserine" evidence="2">
    <location>
        <position position="93"/>
    </location>
</feature>
<feature type="modified residue" description="Phosphoserine" evidence="2">
    <location>
        <position position="97"/>
    </location>
</feature>
<feature type="modified residue" description="Phosphoserine" evidence="2">
    <location>
        <position position="252"/>
    </location>
</feature>
<dbReference type="EC" id="3.6.5.-" evidence="2"/>
<dbReference type="EMBL" id="BC091338">
    <property type="protein sequence ID" value="AAH91338.1"/>
    <property type="molecule type" value="mRNA"/>
</dbReference>
<dbReference type="RefSeq" id="NP_001013439.1">
    <property type="nucleotide sequence ID" value="NM_001013421.1"/>
</dbReference>
<dbReference type="SMR" id="Q5BJT6"/>
<dbReference type="FunCoup" id="Q5BJT6">
    <property type="interactions" value="3789"/>
</dbReference>
<dbReference type="STRING" id="10116.ENSRNOP00000074962"/>
<dbReference type="GlyGen" id="Q5BJT6">
    <property type="glycosylation" value="1 site"/>
</dbReference>
<dbReference type="PhosphoSitePlus" id="Q5BJT6"/>
<dbReference type="jPOST" id="Q5BJT6"/>
<dbReference type="PaxDb" id="10116-ENSRNOP00000002354"/>
<dbReference type="Ensembl" id="ENSRNOT00000002354.7">
    <property type="protein sequence ID" value="ENSRNOP00000002354.5"/>
    <property type="gene ID" value="ENSRNOG00000001727.8"/>
</dbReference>
<dbReference type="GeneID" id="288029"/>
<dbReference type="KEGG" id="rno:288029"/>
<dbReference type="UCSC" id="RGD:1309089">
    <property type="organism name" value="rat"/>
</dbReference>
<dbReference type="AGR" id="RGD:1309089"/>
<dbReference type="CTD" id="55341"/>
<dbReference type="RGD" id="1309089">
    <property type="gene designation" value="Lsg1"/>
</dbReference>
<dbReference type="eggNOG" id="KOG1424">
    <property type="taxonomic scope" value="Eukaryota"/>
</dbReference>
<dbReference type="GeneTree" id="ENSGT00940000156442"/>
<dbReference type="InParanoid" id="Q5BJT6"/>
<dbReference type="PhylomeDB" id="Q5BJT6"/>
<dbReference type="TreeFam" id="TF105747"/>
<dbReference type="PRO" id="PR:Q5BJT6"/>
<dbReference type="Proteomes" id="UP000002494">
    <property type="component" value="Chromosome 11"/>
</dbReference>
<dbReference type="Bgee" id="ENSRNOG00000001727">
    <property type="expression patterns" value="Expressed in skeletal muscle tissue and 20 other cell types or tissues"/>
</dbReference>
<dbReference type="GO" id="GO:0015030">
    <property type="term" value="C:Cajal body"/>
    <property type="evidence" value="ECO:0000250"/>
    <property type="project" value="UniProtKB"/>
</dbReference>
<dbReference type="GO" id="GO:0005829">
    <property type="term" value="C:cytosol"/>
    <property type="evidence" value="ECO:0000318"/>
    <property type="project" value="GO_Central"/>
</dbReference>
<dbReference type="GO" id="GO:0005783">
    <property type="term" value="C:endoplasmic reticulum"/>
    <property type="evidence" value="ECO:0000250"/>
    <property type="project" value="UniProtKB"/>
</dbReference>
<dbReference type="GO" id="GO:0005525">
    <property type="term" value="F:GTP binding"/>
    <property type="evidence" value="ECO:0000250"/>
    <property type="project" value="UniProtKB"/>
</dbReference>
<dbReference type="GO" id="GO:0003924">
    <property type="term" value="F:GTPase activity"/>
    <property type="evidence" value="ECO:0000266"/>
    <property type="project" value="RGD"/>
</dbReference>
<dbReference type="GO" id="GO:0051168">
    <property type="term" value="P:nuclear export"/>
    <property type="evidence" value="ECO:0000250"/>
    <property type="project" value="UniProtKB"/>
</dbReference>
<dbReference type="GO" id="GO:0015031">
    <property type="term" value="P:protein transport"/>
    <property type="evidence" value="ECO:0007669"/>
    <property type="project" value="UniProtKB-KW"/>
</dbReference>
<dbReference type="GO" id="GO:0000054">
    <property type="term" value="P:ribosomal subunit export from nucleus"/>
    <property type="evidence" value="ECO:0000318"/>
    <property type="project" value="GO_Central"/>
</dbReference>
<dbReference type="CDD" id="cd01857">
    <property type="entry name" value="HSR1_MMR1"/>
    <property type="match status" value="1"/>
</dbReference>
<dbReference type="FunFam" id="3.40.50.300:FF:002533">
    <property type="entry name" value="Large subunit GTPase 1"/>
    <property type="match status" value="1"/>
</dbReference>
<dbReference type="FunFam" id="3.40.50.300:FF:003226">
    <property type="entry name" value="Large subunit GTPase 1 homolog"/>
    <property type="match status" value="1"/>
</dbReference>
<dbReference type="Gene3D" id="3.40.50.300">
    <property type="entry name" value="P-loop containing nucleotide triphosphate hydrolases"/>
    <property type="match status" value="1"/>
</dbReference>
<dbReference type="InterPro" id="IPR030378">
    <property type="entry name" value="G_CP_dom"/>
</dbReference>
<dbReference type="InterPro" id="IPR043358">
    <property type="entry name" value="GNL1-like"/>
</dbReference>
<dbReference type="InterPro" id="IPR006073">
    <property type="entry name" value="GTP-bd"/>
</dbReference>
<dbReference type="InterPro" id="IPR027417">
    <property type="entry name" value="P-loop_NTPase"/>
</dbReference>
<dbReference type="PANTHER" id="PTHR45709:SF2">
    <property type="entry name" value="LARGE SUBUNIT GTPASE 1 HOMOLOG"/>
    <property type="match status" value="1"/>
</dbReference>
<dbReference type="PANTHER" id="PTHR45709">
    <property type="entry name" value="LARGE SUBUNIT GTPASE 1 HOMOLOG-RELATED"/>
    <property type="match status" value="1"/>
</dbReference>
<dbReference type="Pfam" id="PF01926">
    <property type="entry name" value="MMR_HSR1"/>
    <property type="match status" value="1"/>
</dbReference>
<dbReference type="PRINTS" id="PR00326">
    <property type="entry name" value="GTP1OBG"/>
</dbReference>
<dbReference type="SUPFAM" id="SSF52540">
    <property type="entry name" value="P-loop containing nucleoside triphosphate hydrolases"/>
    <property type="match status" value="1"/>
</dbReference>
<dbReference type="PROSITE" id="PS51721">
    <property type="entry name" value="G_CP"/>
    <property type="match status" value="1"/>
</dbReference>
<comment type="function">
    <text evidence="2">Functions as a GTPase. May act by mediating the release of NMD3 from the 60S ribosomal subunit after export into the cytoplasm during the 60S ribosomal subunit maturation.</text>
</comment>
<comment type="catalytic activity">
    <reaction evidence="2">
        <text>GTP + H2O = GDP + phosphate + H(+)</text>
        <dbReference type="Rhea" id="RHEA:19669"/>
        <dbReference type="ChEBI" id="CHEBI:15377"/>
        <dbReference type="ChEBI" id="CHEBI:15378"/>
        <dbReference type="ChEBI" id="CHEBI:37565"/>
        <dbReference type="ChEBI" id="CHEBI:43474"/>
        <dbReference type="ChEBI" id="CHEBI:58189"/>
    </reaction>
</comment>
<comment type="subcellular location">
    <subcellularLocation>
        <location evidence="2">Cytoplasm</location>
    </subcellularLocation>
    <subcellularLocation>
        <location evidence="2">Endoplasmic reticulum</location>
    </subcellularLocation>
    <subcellularLocation>
        <location evidence="2">Nucleus</location>
        <location evidence="2">Cajal body</location>
    </subcellularLocation>
    <text evidence="2">between the cytosol and Cajal bodies via a XPO1/CRM1-dependent export mechanism.</text>
</comment>
<comment type="domain">
    <text evidence="2">In contrast to other GTP-binding proteins, this family is characterized by a circular permutation of the GTPase motifs described by a G4-G1-G3 pattern.</text>
</comment>
<comment type="similarity">
    <text evidence="4">Belongs to the TRAFAC class YlqF/YawG GTPase family. LSG1 subfamily.</text>
</comment>
<protein>
    <recommendedName>
        <fullName evidence="1">Large subunit GTPase 1 homolog</fullName>
        <ecNumber evidence="2">3.6.5.-</ecNumber>
    </recommendedName>
</protein>
<organism>
    <name type="scientific">Rattus norvegicus</name>
    <name type="common">Rat</name>
    <dbReference type="NCBI Taxonomy" id="10116"/>
    <lineage>
        <taxon>Eukaryota</taxon>
        <taxon>Metazoa</taxon>
        <taxon>Chordata</taxon>
        <taxon>Craniata</taxon>
        <taxon>Vertebrata</taxon>
        <taxon>Euteleostomi</taxon>
        <taxon>Mammalia</taxon>
        <taxon>Eutheria</taxon>
        <taxon>Euarchontoglires</taxon>
        <taxon>Glires</taxon>
        <taxon>Rodentia</taxon>
        <taxon>Myomorpha</taxon>
        <taxon>Muroidea</taxon>
        <taxon>Muridae</taxon>
        <taxon>Murinae</taxon>
        <taxon>Rattus</taxon>
    </lineage>
</organism>
<sequence>MGRRRAPGGGSLGRVLIRHQTQRSRSHRHTDSWLHTSELNDGYDWGRLNLQSVTEQSSLEDFLATAELAGTEFVAEKLNIKFVPPEARTGLLSFEESQRIKRLHEENRQFLCIPRRPNWDRKTSPEELKQAEKDNFLKWRRQLVRLEEEQKLILTPFERNLDFWRQLWRVIERSDIVVQIVDARNPLLFRCEDLECYVKEIDAAKENVILINKADLLTAEQRVAWAVHFEKEGVKVIFWSALAETVHLNGDSKDEVNSVAGEANSSESEDSSLDGNEIPHRDLFLLSEESESDDDDSEYEDCQEDEEEDWQTCSEEDSNPEEGQEEGGCDRDQKEHGPEDSEAQSRASPENSQMSNKSHLVSKQELLELFKKLHTGKKVKDGQLTVGLVGYPNVGKSSTINTIMGNKKVSVSATPGHTKHFQTLYVEPGLCLCDCPGLVMPSFVSTKAEMICSGILPIDQMRDHVPPVSLVCQNIPRRVLEATYGINIIKPGEDEDPYRPPTSEELLTAYGCMRGFMTAHGQPDQPRSARYILKDYVRGKLLYCHPPPGKDPVAFQHQHRQLLENKIKGEELRLQPGKTQKAKQVENVVDKTFFHQENVRALTKGVQAVMGYKPGSGLVTAAAASAENVPGKPWKKHGNRNKKEKSRRLYRHLDV</sequence>
<evidence type="ECO:0000250" key="1">
    <source>
        <dbReference type="UniProtKB" id="P53145"/>
    </source>
</evidence>
<evidence type="ECO:0000250" key="2">
    <source>
        <dbReference type="UniProtKB" id="Q9H089"/>
    </source>
</evidence>
<evidence type="ECO:0000255" key="3"/>
<evidence type="ECO:0000255" key="4">
    <source>
        <dbReference type="PROSITE-ProRule" id="PRU01058"/>
    </source>
</evidence>
<evidence type="ECO:0000256" key="5">
    <source>
        <dbReference type="SAM" id="MobiDB-lite"/>
    </source>
</evidence>
<evidence type="ECO:0000312" key="6">
    <source>
        <dbReference type="RGD" id="1309089"/>
    </source>
</evidence>